<organism>
    <name type="scientific">Rhizobium etli (strain ATCC 51251 / DSM 11541 / JCM 21823 / NBRC 15573 / CFN 42)</name>
    <dbReference type="NCBI Taxonomy" id="347834"/>
    <lineage>
        <taxon>Bacteria</taxon>
        <taxon>Pseudomonadati</taxon>
        <taxon>Pseudomonadota</taxon>
        <taxon>Alphaproteobacteria</taxon>
        <taxon>Hyphomicrobiales</taxon>
        <taxon>Rhizobiaceae</taxon>
        <taxon>Rhizobium/Agrobacterium group</taxon>
        <taxon>Rhizobium</taxon>
    </lineage>
</organism>
<evidence type="ECO:0000255" key="1">
    <source>
        <dbReference type="HAMAP-Rule" id="MF_01325"/>
    </source>
</evidence>
<evidence type="ECO:0000305" key="2"/>
<dbReference type="EMBL" id="CP000133">
    <property type="protein sequence ID" value="ABC90470.1"/>
    <property type="molecule type" value="Genomic_DNA"/>
</dbReference>
<dbReference type="RefSeq" id="WP_011424981.1">
    <property type="nucleotide sequence ID" value="NC_007761.1"/>
</dbReference>
<dbReference type="SMR" id="Q2K9L6"/>
<dbReference type="KEGG" id="ret:RHE_CH01675"/>
<dbReference type="eggNOG" id="COG0087">
    <property type="taxonomic scope" value="Bacteria"/>
</dbReference>
<dbReference type="HOGENOM" id="CLU_044142_2_0_5"/>
<dbReference type="OrthoDB" id="9806135at2"/>
<dbReference type="Proteomes" id="UP000001936">
    <property type="component" value="Chromosome"/>
</dbReference>
<dbReference type="GO" id="GO:0022625">
    <property type="term" value="C:cytosolic large ribosomal subunit"/>
    <property type="evidence" value="ECO:0007669"/>
    <property type="project" value="TreeGrafter"/>
</dbReference>
<dbReference type="GO" id="GO:0019843">
    <property type="term" value="F:rRNA binding"/>
    <property type="evidence" value="ECO:0007669"/>
    <property type="project" value="UniProtKB-UniRule"/>
</dbReference>
<dbReference type="GO" id="GO:0003735">
    <property type="term" value="F:structural constituent of ribosome"/>
    <property type="evidence" value="ECO:0007669"/>
    <property type="project" value="InterPro"/>
</dbReference>
<dbReference type="GO" id="GO:0006412">
    <property type="term" value="P:translation"/>
    <property type="evidence" value="ECO:0007669"/>
    <property type="project" value="UniProtKB-UniRule"/>
</dbReference>
<dbReference type="FunFam" id="2.40.30.10:FF:000004">
    <property type="entry name" value="50S ribosomal protein L3"/>
    <property type="match status" value="1"/>
</dbReference>
<dbReference type="FunFam" id="3.30.160.810:FF:000001">
    <property type="entry name" value="50S ribosomal protein L3"/>
    <property type="match status" value="1"/>
</dbReference>
<dbReference type="Gene3D" id="3.30.160.810">
    <property type="match status" value="1"/>
</dbReference>
<dbReference type="Gene3D" id="2.40.30.10">
    <property type="entry name" value="Translation factors"/>
    <property type="match status" value="1"/>
</dbReference>
<dbReference type="HAMAP" id="MF_01325_B">
    <property type="entry name" value="Ribosomal_uL3_B"/>
    <property type="match status" value="1"/>
</dbReference>
<dbReference type="InterPro" id="IPR000597">
    <property type="entry name" value="Ribosomal_uL3"/>
</dbReference>
<dbReference type="InterPro" id="IPR019927">
    <property type="entry name" value="Ribosomal_uL3_bac/org-type"/>
</dbReference>
<dbReference type="InterPro" id="IPR019926">
    <property type="entry name" value="Ribosomal_uL3_CS"/>
</dbReference>
<dbReference type="InterPro" id="IPR009000">
    <property type="entry name" value="Transl_B-barrel_sf"/>
</dbReference>
<dbReference type="NCBIfam" id="TIGR03625">
    <property type="entry name" value="L3_bact"/>
    <property type="match status" value="1"/>
</dbReference>
<dbReference type="PANTHER" id="PTHR11229">
    <property type="entry name" value="50S RIBOSOMAL PROTEIN L3"/>
    <property type="match status" value="1"/>
</dbReference>
<dbReference type="PANTHER" id="PTHR11229:SF16">
    <property type="entry name" value="LARGE RIBOSOMAL SUBUNIT PROTEIN UL3C"/>
    <property type="match status" value="1"/>
</dbReference>
<dbReference type="Pfam" id="PF00297">
    <property type="entry name" value="Ribosomal_L3"/>
    <property type="match status" value="1"/>
</dbReference>
<dbReference type="SUPFAM" id="SSF50447">
    <property type="entry name" value="Translation proteins"/>
    <property type="match status" value="1"/>
</dbReference>
<dbReference type="PROSITE" id="PS00474">
    <property type="entry name" value="RIBOSOMAL_L3"/>
    <property type="match status" value="1"/>
</dbReference>
<sequence>MRSGVIAQKVGMTRVYNDAGEHVPVTVLRMDGCQVVATRTVEKNGYTAVQLGAGQAKVKNTSKAMRGNFAVANVEPKAKLAEFRVSEDNLLEIGTELKADHFAAGQLVDVTGTTIGKGFAGAMKRHGFGGLRATHGVSVSHRSHGSTGSRQDPGKVFKNKKMAGHMGQTRVTTQNLEVVSTDEDRGLILIKGAVPGSKGAWIIVRDAVKSAAK</sequence>
<reference key="1">
    <citation type="journal article" date="2006" name="Proc. Natl. Acad. Sci. U.S.A.">
        <title>The partitioned Rhizobium etli genome: genetic and metabolic redundancy in seven interacting replicons.</title>
        <authorList>
            <person name="Gonzalez V."/>
            <person name="Santamaria R.I."/>
            <person name="Bustos P."/>
            <person name="Hernandez-Gonzalez I."/>
            <person name="Medrano-Soto A."/>
            <person name="Moreno-Hagelsieb G."/>
            <person name="Janga S.C."/>
            <person name="Ramirez M.A."/>
            <person name="Jimenez-Jacinto V."/>
            <person name="Collado-Vides J."/>
            <person name="Davila G."/>
        </authorList>
    </citation>
    <scope>NUCLEOTIDE SEQUENCE [LARGE SCALE GENOMIC DNA]</scope>
    <source>
        <strain>ATCC 51251 / DSM 11541 / JCM 21823 / NBRC 15573 / CFN 42</strain>
    </source>
</reference>
<proteinExistence type="inferred from homology"/>
<comment type="function">
    <text evidence="1">One of the primary rRNA binding proteins, it binds directly near the 3'-end of the 23S rRNA, where it nucleates assembly of the 50S subunit.</text>
</comment>
<comment type="subunit">
    <text evidence="1">Part of the 50S ribosomal subunit. Forms a cluster with proteins L14 and L19.</text>
</comment>
<comment type="PTM">
    <text evidence="1">Methylated by PrmB.</text>
</comment>
<comment type="similarity">
    <text evidence="1">Belongs to the universal ribosomal protein uL3 family.</text>
</comment>
<gene>
    <name evidence="1" type="primary">rplC</name>
    <name type="ordered locus">RHE_CH01675</name>
</gene>
<name>RL3_RHIEC</name>
<protein>
    <recommendedName>
        <fullName evidence="1">Large ribosomal subunit protein uL3</fullName>
    </recommendedName>
    <alternativeName>
        <fullName evidence="2">50S ribosomal protein L3</fullName>
    </alternativeName>
</protein>
<accession>Q2K9L6</accession>
<feature type="chain" id="PRO_0000241396" description="Large ribosomal subunit protein uL3">
    <location>
        <begin position="1"/>
        <end position="213"/>
    </location>
</feature>
<feature type="modified residue" description="N5-methylglutamine" evidence="1">
    <location>
        <position position="151"/>
    </location>
</feature>
<keyword id="KW-0488">Methylation</keyword>
<keyword id="KW-1185">Reference proteome</keyword>
<keyword id="KW-0687">Ribonucleoprotein</keyword>
<keyword id="KW-0689">Ribosomal protein</keyword>
<keyword id="KW-0694">RNA-binding</keyword>
<keyword id="KW-0699">rRNA-binding</keyword>